<dbReference type="EC" id="3.6.5.3" evidence="2"/>
<dbReference type="EMBL" id="LT708304">
    <property type="protein sequence ID" value="SIT99302.1"/>
    <property type="molecule type" value="Genomic_DNA"/>
</dbReference>
<dbReference type="RefSeq" id="NP_854362.1">
    <property type="nucleotide sequence ID" value="NC_002945.3"/>
</dbReference>
<dbReference type="RefSeq" id="WP_003403463.1">
    <property type="nucleotide sequence ID" value="NC_002945.4"/>
</dbReference>
<dbReference type="SMR" id="P0A559"/>
<dbReference type="GeneID" id="45424647"/>
<dbReference type="KEGG" id="mbo:BQ2027_MB0704"/>
<dbReference type="PATRIC" id="fig|233413.5.peg.767"/>
<dbReference type="Proteomes" id="UP000001419">
    <property type="component" value="Chromosome"/>
</dbReference>
<dbReference type="GO" id="GO:0005829">
    <property type="term" value="C:cytosol"/>
    <property type="evidence" value="ECO:0007669"/>
    <property type="project" value="TreeGrafter"/>
</dbReference>
<dbReference type="GO" id="GO:0005525">
    <property type="term" value="F:GTP binding"/>
    <property type="evidence" value="ECO:0007669"/>
    <property type="project" value="UniProtKB-UniRule"/>
</dbReference>
<dbReference type="GO" id="GO:0003924">
    <property type="term" value="F:GTPase activity"/>
    <property type="evidence" value="ECO:0007669"/>
    <property type="project" value="InterPro"/>
</dbReference>
<dbReference type="GO" id="GO:0003746">
    <property type="term" value="F:translation elongation factor activity"/>
    <property type="evidence" value="ECO:0007669"/>
    <property type="project" value="UniProtKB-UniRule"/>
</dbReference>
<dbReference type="CDD" id="cd01884">
    <property type="entry name" value="EF_Tu"/>
    <property type="match status" value="1"/>
</dbReference>
<dbReference type="CDD" id="cd03697">
    <property type="entry name" value="EFTU_II"/>
    <property type="match status" value="1"/>
</dbReference>
<dbReference type="CDD" id="cd03707">
    <property type="entry name" value="EFTU_III"/>
    <property type="match status" value="1"/>
</dbReference>
<dbReference type="FunFam" id="2.40.30.10:FF:000001">
    <property type="entry name" value="Elongation factor Tu"/>
    <property type="match status" value="1"/>
</dbReference>
<dbReference type="FunFam" id="3.40.50.300:FF:000003">
    <property type="entry name" value="Elongation factor Tu"/>
    <property type="match status" value="1"/>
</dbReference>
<dbReference type="Gene3D" id="3.40.50.300">
    <property type="entry name" value="P-loop containing nucleotide triphosphate hydrolases"/>
    <property type="match status" value="1"/>
</dbReference>
<dbReference type="Gene3D" id="2.40.30.10">
    <property type="entry name" value="Translation factors"/>
    <property type="match status" value="2"/>
</dbReference>
<dbReference type="HAMAP" id="MF_00118_B">
    <property type="entry name" value="EF_Tu_B"/>
    <property type="match status" value="1"/>
</dbReference>
<dbReference type="InterPro" id="IPR041709">
    <property type="entry name" value="EF-Tu_GTP-bd"/>
</dbReference>
<dbReference type="InterPro" id="IPR050055">
    <property type="entry name" value="EF-Tu_GTPase"/>
</dbReference>
<dbReference type="InterPro" id="IPR004161">
    <property type="entry name" value="EFTu-like_2"/>
</dbReference>
<dbReference type="InterPro" id="IPR033720">
    <property type="entry name" value="EFTU_2"/>
</dbReference>
<dbReference type="InterPro" id="IPR031157">
    <property type="entry name" value="G_TR_CS"/>
</dbReference>
<dbReference type="InterPro" id="IPR027417">
    <property type="entry name" value="P-loop_NTPase"/>
</dbReference>
<dbReference type="InterPro" id="IPR005225">
    <property type="entry name" value="Small_GTP-bd"/>
</dbReference>
<dbReference type="InterPro" id="IPR000795">
    <property type="entry name" value="T_Tr_GTP-bd_dom"/>
</dbReference>
<dbReference type="InterPro" id="IPR009000">
    <property type="entry name" value="Transl_B-barrel_sf"/>
</dbReference>
<dbReference type="InterPro" id="IPR009001">
    <property type="entry name" value="Transl_elong_EF1A/Init_IF2_C"/>
</dbReference>
<dbReference type="InterPro" id="IPR004541">
    <property type="entry name" value="Transl_elong_EFTu/EF1A_bac/org"/>
</dbReference>
<dbReference type="InterPro" id="IPR004160">
    <property type="entry name" value="Transl_elong_EFTu/EF1A_C"/>
</dbReference>
<dbReference type="NCBIfam" id="TIGR00485">
    <property type="entry name" value="EF-Tu"/>
    <property type="match status" value="1"/>
</dbReference>
<dbReference type="NCBIfam" id="NF000766">
    <property type="entry name" value="PRK00049.1"/>
    <property type="match status" value="1"/>
</dbReference>
<dbReference type="NCBIfam" id="NF009372">
    <property type="entry name" value="PRK12735.1"/>
    <property type="match status" value="1"/>
</dbReference>
<dbReference type="NCBIfam" id="NF009373">
    <property type="entry name" value="PRK12736.1"/>
    <property type="match status" value="1"/>
</dbReference>
<dbReference type="NCBIfam" id="TIGR00231">
    <property type="entry name" value="small_GTP"/>
    <property type="match status" value="1"/>
</dbReference>
<dbReference type="PANTHER" id="PTHR43721:SF22">
    <property type="entry name" value="ELONGATION FACTOR TU, MITOCHONDRIAL"/>
    <property type="match status" value="1"/>
</dbReference>
<dbReference type="PANTHER" id="PTHR43721">
    <property type="entry name" value="ELONGATION FACTOR TU-RELATED"/>
    <property type="match status" value="1"/>
</dbReference>
<dbReference type="Pfam" id="PF00009">
    <property type="entry name" value="GTP_EFTU"/>
    <property type="match status" value="1"/>
</dbReference>
<dbReference type="Pfam" id="PF03144">
    <property type="entry name" value="GTP_EFTU_D2"/>
    <property type="match status" value="1"/>
</dbReference>
<dbReference type="Pfam" id="PF03143">
    <property type="entry name" value="GTP_EFTU_D3"/>
    <property type="match status" value="1"/>
</dbReference>
<dbReference type="PRINTS" id="PR00315">
    <property type="entry name" value="ELONGATNFCT"/>
</dbReference>
<dbReference type="SUPFAM" id="SSF50465">
    <property type="entry name" value="EF-Tu/eEF-1alpha/eIF2-gamma C-terminal domain"/>
    <property type="match status" value="1"/>
</dbReference>
<dbReference type="SUPFAM" id="SSF52540">
    <property type="entry name" value="P-loop containing nucleoside triphosphate hydrolases"/>
    <property type="match status" value="1"/>
</dbReference>
<dbReference type="SUPFAM" id="SSF50447">
    <property type="entry name" value="Translation proteins"/>
    <property type="match status" value="1"/>
</dbReference>
<dbReference type="PROSITE" id="PS00301">
    <property type="entry name" value="G_TR_1"/>
    <property type="match status" value="1"/>
</dbReference>
<dbReference type="PROSITE" id="PS51722">
    <property type="entry name" value="G_TR_2"/>
    <property type="match status" value="1"/>
</dbReference>
<evidence type="ECO:0000250" key="1"/>
<evidence type="ECO:0000255" key="2">
    <source>
        <dbReference type="HAMAP-Rule" id="MF_00118"/>
    </source>
</evidence>
<gene>
    <name evidence="2" type="primary">tuf</name>
    <name type="ordered locus">BQ2027_MB0704</name>
</gene>
<organism>
    <name type="scientific">Mycobacterium bovis (strain ATCC BAA-935 / AF2122/97)</name>
    <dbReference type="NCBI Taxonomy" id="233413"/>
    <lineage>
        <taxon>Bacteria</taxon>
        <taxon>Bacillati</taxon>
        <taxon>Actinomycetota</taxon>
        <taxon>Actinomycetes</taxon>
        <taxon>Mycobacteriales</taxon>
        <taxon>Mycobacteriaceae</taxon>
        <taxon>Mycobacterium</taxon>
        <taxon>Mycobacterium tuberculosis complex</taxon>
    </lineage>
</organism>
<protein>
    <recommendedName>
        <fullName evidence="2">Elongation factor Tu</fullName>
        <shortName evidence="2">EF-Tu</shortName>
        <ecNumber evidence="2">3.6.5.3</ecNumber>
    </recommendedName>
</protein>
<keyword id="KW-0963">Cytoplasm</keyword>
<keyword id="KW-0251">Elongation factor</keyword>
<keyword id="KW-0342">GTP-binding</keyword>
<keyword id="KW-0378">Hydrolase</keyword>
<keyword id="KW-0460">Magnesium</keyword>
<keyword id="KW-0479">Metal-binding</keyword>
<keyword id="KW-0547">Nucleotide-binding</keyword>
<keyword id="KW-0648">Protein biosynthesis</keyword>
<keyword id="KW-1185">Reference proteome</keyword>
<sequence>MAKAKFQRTKPHVNIGTIGHVDHGKTTLTAAITKVLHDKFPDLNETKAFDQIDNAPEERQRGITINIAHVEYQTDKRHYAHVDAPGHADYIKNMITGAAQMDGAILVVAATDGPMPQTREHVLLARQVGVPYILVALNKADAVDDEELLELVEMEVRELLAAQEFDEDAPVVRVSALKALEGDAKWVASVEELMNAVDESIPDPVRETDKPFLMPVEDVFTITGRGTVVTGRVERGVINVNEEVEIVGIRPSTTKTTVTGVEMFRKLLDQGQAGDNVGLLLRGVKREDVERGQVVTKPGTTTPHTEFEGQVYILSKDEGGRHTPFFNNYRPQFYFRTTDVTGVVTLPEGTEMVMPGDNTNISVKLIQPVAMDEGLRFAIREGGRTVGAGRVTKIIK</sequence>
<feature type="chain" id="PRO_0000091354" description="Elongation factor Tu">
    <location>
        <begin position="1"/>
        <end position="396"/>
    </location>
</feature>
<feature type="domain" description="tr-type G">
    <location>
        <begin position="10"/>
        <end position="205"/>
    </location>
</feature>
<feature type="region of interest" description="G1" evidence="1">
    <location>
        <begin position="19"/>
        <end position="26"/>
    </location>
</feature>
<feature type="region of interest" description="G2" evidence="1">
    <location>
        <begin position="62"/>
        <end position="66"/>
    </location>
</feature>
<feature type="region of interest" description="G3" evidence="1">
    <location>
        <begin position="83"/>
        <end position="86"/>
    </location>
</feature>
<feature type="region of interest" description="G4" evidence="1">
    <location>
        <begin position="138"/>
        <end position="141"/>
    </location>
</feature>
<feature type="region of interest" description="G5" evidence="1">
    <location>
        <begin position="175"/>
        <end position="177"/>
    </location>
</feature>
<feature type="binding site" evidence="2">
    <location>
        <begin position="19"/>
        <end position="26"/>
    </location>
    <ligand>
        <name>GTP</name>
        <dbReference type="ChEBI" id="CHEBI:37565"/>
    </ligand>
</feature>
<feature type="binding site" evidence="2">
    <location>
        <position position="26"/>
    </location>
    <ligand>
        <name>Mg(2+)</name>
        <dbReference type="ChEBI" id="CHEBI:18420"/>
    </ligand>
</feature>
<feature type="binding site" evidence="2">
    <location>
        <begin position="83"/>
        <end position="87"/>
    </location>
    <ligand>
        <name>GTP</name>
        <dbReference type="ChEBI" id="CHEBI:37565"/>
    </ligand>
</feature>
<feature type="binding site" evidence="2">
    <location>
        <begin position="138"/>
        <end position="141"/>
    </location>
    <ligand>
        <name>GTP</name>
        <dbReference type="ChEBI" id="CHEBI:37565"/>
    </ligand>
</feature>
<accession>P0A559</accession>
<accession>A0A1R3XY80</accession>
<accession>P31501</accession>
<accession>P95031</accession>
<accession>Q50823</accession>
<accession>X2BFM6</accession>
<reference key="1">
    <citation type="journal article" date="2003" name="Proc. Natl. Acad. Sci. U.S.A.">
        <title>The complete genome sequence of Mycobacterium bovis.</title>
        <authorList>
            <person name="Garnier T."/>
            <person name="Eiglmeier K."/>
            <person name="Camus J.-C."/>
            <person name="Medina N."/>
            <person name="Mansoor H."/>
            <person name="Pryor M."/>
            <person name="Duthoy S."/>
            <person name="Grondin S."/>
            <person name="Lacroix C."/>
            <person name="Monsempe C."/>
            <person name="Simon S."/>
            <person name="Harris B."/>
            <person name="Atkin R."/>
            <person name="Doggett J."/>
            <person name="Mayes R."/>
            <person name="Keating L."/>
            <person name="Wheeler P.R."/>
            <person name="Parkhill J."/>
            <person name="Barrell B.G."/>
            <person name="Cole S.T."/>
            <person name="Gordon S.V."/>
            <person name="Hewinson R.G."/>
        </authorList>
    </citation>
    <scope>NUCLEOTIDE SEQUENCE [LARGE SCALE GENOMIC DNA]</scope>
    <source>
        <strain>ATCC BAA-935 / AF2122/97</strain>
    </source>
</reference>
<reference key="2">
    <citation type="journal article" date="2017" name="Genome Announc.">
        <title>Updated reference genome sequence and annotation of Mycobacterium bovis AF2122/97.</title>
        <authorList>
            <person name="Malone K.M."/>
            <person name="Farrell D."/>
            <person name="Stuber T.P."/>
            <person name="Schubert O.T."/>
            <person name="Aebersold R."/>
            <person name="Robbe-Austerman S."/>
            <person name="Gordon S.V."/>
        </authorList>
    </citation>
    <scope>NUCLEOTIDE SEQUENCE [LARGE SCALE GENOMIC DNA]</scope>
    <scope>GENOME REANNOTATION</scope>
    <source>
        <strain>ATCC BAA-935 / AF2122/97</strain>
    </source>
</reference>
<comment type="function">
    <text evidence="2">GTP hydrolase that promotes the GTP-dependent binding of aminoacyl-tRNA to the A-site of ribosomes during protein biosynthesis.</text>
</comment>
<comment type="catalytic activity">
    <reaction evidence="2">
        <text>GTP + H2O = GDP + phosphate + H(+)</text>
        <dbReference type="Rhea" id="RHEA:19669"/>
        <dbReference type="ChEBI" id="CHEBI:15377"/>
        <dbReference type="ChEBI" id="CHEBI:15378"/>
        <dbReference type="ChEBI" id="CHEBI:37565"/>
        <dbReference type="ChEBI" id="CHEBI:43474"/>
        <dbReference type="ChEBI" id="CHEBI:58189"/>
        <dbReference type="EC" id="3.6.5.3"/>
    </reaction>
    <physiologicalReaction direction="left-to-right" evidence="2">
        <dbReference type="Rhea" id="RHEA:19670"/>
    </physiologicalReaction>
</comment>
<comment type="subunit">
    <text evidence="2">Monomer.</text>
</comment>
<comment type="subcellular location">
    <subcellularLocation>
        <location evidence="2">Cytoplasm</location>
    </subcellularLocation>
</comment>
<comment type="similarity">
    <text evidence="2">Belongs to the TRAFAC class translation factor GTPase superfamily. Classic translation factor GTPase family. EF-Tu/EF-1A subfamily.</text>
</comment>
<proteinExistence type="inferred from homology"/>
<name>EFTU_MYCBO</name>